<sequence length="648" mass="70170">MLYPRAIRLRFACKLTLASVLSLLLGFYFGLPMPRWSALTAALVAAAPAFAAGGEPFSGAIRYRGWLRIIGTVLGSLCALLLMMLLIRAPLLMILLCCLWAGVCTWLSSLVRMENSYALGLSGYTALIIVVSCLGEPQFILQLALERCGEIVLGIVCAVLVDTLLAPRSVKGEVDRVVGGMLLGQLRLLQCCVDGRDGDAIDRSWHRLIRESHTLEEMRASLALESSRWPRACRRLTALHTLSLTLITRACEIFLTQCQTPMALPAPFLALIAAPVDTPEEAYQRLKQLRRLLVAHGEHQLPPALIGWIGGASRLQLLVKGVASNVRIGRYEAATLAHDTAPRPLYSVQGHHALINGLRTWLATSLGALFWLWSGWSAGSGCMIMIAVVTSLAVRTPNPRMAAIDFLMGSLVALPVGALYYTLILPATQQSLVLLCLSLGALTFICGMAVQKRRLGSMGTLASTLNILALSNPMGFPIERFVDSAIGQMVGCLLALVVLLVVHDRSRARTGRALMRHLAFGAVAALRREGTRGNLLPALYRQLLLLLTLFPDDIGRYRLALTLIVLQQRLAHSALPCDAGRLRAIDAAATRLLSGGGSARCSGALLQLTTELGDYADCLARQGIASAVLQPLHQLADVLYRYRSVLLD</sequence>
<keyword id="KW-0997">Cell inner membrane</keyword>
<keyword id="KW-1003">Cell membrane</keyword>
<keyword id="KW-0472">Membrane</keyword>
<keyword id="KW-0812">Transmembrane</keyword>
<keyword id="KW-1133">Transmembrane helix</keyword>
<keyword id="KW-0813">Transport</keyword>
<evidence type="ECO:0000255" key="1">
    <source>
        <dbReference type="HAMAP-Rule" id="MF_01545"/>
    </source>
</evidence>
<accession>C5BC09</accession>
<comment type="function">
    <text evidence="1">Forms an efflux pump with AaeA. Could function as a metabolic relief valve, allowing to eliminate certain compounds when they accumulate to high levels in the cell.</text>
</comment>
<comment type="subcellular location">
    <subcellularLocation>
        <location evidence="1">Cell inner membrane</location>
        <topology evidence="1">Multi-pass membrane protein</topology>
    </subcellularLocation>
</comment>
<comment type="similarity">
    <text evidence="1">Belongs to the aromatic acid exporter ArAE (TC 2.A.85) family.</text>
</comment>
<proteinExistence type="inferred from homology"/>
<gene>
    <name evidence="1" type="primary">aaeB</name>
    <name type="ordered locus">NT01EI_3480</name>
</gene>
<feature type="chain" id="PRO_0000414000" description="p-hydroxybenzoic acid efflux pump subunit AaeB">
    <location>
        <begin position="1"/>
        <end position="648"/>
    </location>
</feature>
<feature type="transmembrane region" description="Helical" evidence="1">
    <location>
        <begin position="11"/>
        <end position="31"/>
    </location>
</feature>
<feature type="transmembrane region" description="Helical" evidence="1">
    <location>
        <begin position="41"/>
        <end position="61"/>
    </location>
</feature>
<feature type="transmembrane region" description="Helical" evidence="1">
    <location>
        <begin position="65"/>
        <end position="87"/>
    </location>
</feature>
<feature type="transmembrane region" description="Helical" evidence="1">
    <location>
        <begin position="91"/>
        <end position="110"/>
    </location>
</feature>
<feature type="transmembrane region" description="Helical" evidence="1">
    <location>
        <begin position="125"/>
        <end position="145"/>
    </location>
</feature>
<feature type="transmembrane region" description="Helical" evidence="1">
    <location>
        <begin position="150"/>
        <end position="170"/>
    </location>
</feature>
<feature type="transmembrane region" description="Helical" evidence="1">
    <location>
        <begin position="369"/>
        <end position="389"/>
    </location>
</feature>
<feature type="transmembrane region" description="Helical" evidence="1">
    <location>
        <begin position="406"/>
        <end position="426"/>
    </location>
</feature>
<feature type="transmembrane region" description="Helical" evidence="1">
    <location>
        <begin position="430"/>
        <end position="450"/>
    </location>
</feature>
<feature type="transmembrane region" description="Helical" evidence="1">
    <location>
        <begin position="458"/>
        <end position="478"/>
    </location>
</feature>
<feature type="transmembrane region" description="Helical" evidence="1">
    <location>
        <begin position="481"/>
        <end position="501"/>
    </location>
</feature>
<protein>
    <recommendedName>
        <fullName evidence="1">p-hydroxybenzoic acid efflux pump subunit AaeB</fullName>
        <shortName evidence="1">pHBA efflux pump protein B</shortName>
    </recommendedName>
</protein>
<dbReference type="EMBL" id="CP001600">
    <property type="protein sequence ID" value="ACR70616.1"/>
    <property type="molecule type" value="Genomic_DNA"/>
</dbReference>
<dbReference type="RefSeq" id="WP_015872688.1">
    <property type="nucleotide sequence ID" value="NZ_CP169062.1"/>
</dbReference>
<dbReference type="SMR" id="C5BC09"/>
<dbReference type="GeneID" id="69540327"/>
<dbReference type="KEGG" id="eic:NT01EI_3480"/>
<dbReference type="PATRIC" id="fig|634503.3.peg.3098"/>
<dbReference type="HOGENOM" id="CLU_027647_0_0_6"/>
<dbReference type="OrthoDB" id="9807111at2"/>
<dbReference type="Proteomes" id="UP000001485">
    <property type="component" value="Chromosome"/>
</dbReference>
<dbReference type="GO" id="GO:0005886">
    <property type="term" value="C:plasma membrane"/>
    <property type="evidence" value="ECO:0007669"/>
    <property type="project" value="UniProtKB-SubCell"/>
</dbReference>
<dbReference type="GO" id="GO:0022857">
    <property type="term" value="F:transmembrane transporter activity"/>
    <property type="evidence" value="ECO:0007669"/>
    <property type="project" value="UniProtKB-UniRule"/>
</dbReference>
<dbReference type="GO" id="GO:0046942">
    <property type="term" value="P:carboxylic acid transport"/>
    <property type="evidence" value="ECO:0007669"/>
    <property type="project" value="InterPro"/>
</dbReference>
<dbReference type="HAMAP" id="MF_01545">
    <property type="entry name" value="AaeB"/>
    <property type="match status" value="1"/>
</dbReference>
<dbReference type="InterPro" id="IPR006726">
    <property type="entry name" value="PHBA_efflux_AaeB/fusaric-R"/>
</dbReference>
<dbReference type="InterPro" id="IPR023706">
    <property type="entry name" value="PHBA_efflux_pump_AaeB"/>
</dbReference>
<dbReference type="NCBIfam" id="NF007916">
    <property type="entry name" value="PRK10631.1"/>
    <property type="match status" value="1"/>
</dbReference>
<dbReference type="PANTHER" id="PTHR30509:SF9">
    <property type="entry name" value="MULTIDRUG RESISTANCE PROTEIN MDTO"/>
    <property type="match status" value="1"/>
</dbReference>
<dbReference type="PANTHER" id="PTHR30509">
    <property type="entry name" value="P-HYDROXYBENZOIC ACID EFFLUX PUMP SUBUNIT-RELATED"/>
    <property type="match status" value="1"/>
</dbReference>
<dbReference type="Pfam" id="PF04632">
    <property type="entry name" value="FUSC"/>
    <property type="match status" value="1"/>
</dbReference>
<organism>
    <name type="scientific">Edwardsiella ictaluri (strain 93-146)</name>
    <dbReference type="NCBI Taxonomy" id="634503"/>
    <lineage>
        <taxon>Bacteria</taxon>
        <taxon>Pseudomonadati</taxon>
        <taxon>Pseudomonadota</taxon>
        <taxon>Gammaproteobacteria</taxon>
        <taxon>Enterobacterales</taxon>
        <taxon>Hafniaceae</taxon>
        <taxon>Edwardsiella</taxon>
    </lineage>
</organism>
<name>AAEB_EDWI9</name>
<reference key="1">
    <citation type="submission" date="2009-03" db="EMBL/GenBank/DDBJ databases">
        <title>Complete genome sequence of Edwardsiella ictaluri 93-146.</title>
        <authorList>
            <person name="Williams M.L."/>
            <person name="Gillaspy A.F."/>
            <person name="Dyer D.W."/>
            <person name="Thune R.L."/>
            <person name="Waldbieser G.C."/>
            <person name="Schuster S.C."/>
            <person name="Gipson J."/>
            <person name="Zaitshik J."/>
            <person name="Landry C."/>
            <person name="Lawrence M.L."/>
        </authorList>
    </citation>
    <scope>NUCLEOTIDE SEQUENCE [LARGE SCALE GENOMIC DNA]</scope>
    <source>
        <strain>93-146</strain>
    </source>
</reference>